<dbReference type="EMBL" id="DN512948">
    <property type="status" value="NOT_ANNOTATED_CDS"/>
    <property type="molecule type" value="mRNA"/>
</dbReference>
<dbReference type="PIR" id="A03161">
    <property type="entry name" value="BFBO"/>
</dbReference>
<dbReference type="SMR" id="P02702"/>
<dbReference type="FunCoup" id="P02702">
    <property type="interactions" value="248"/>
</dbReference>
<dbReference type="STRING" id="9913.ENSBTAP00000066189"/>
<dbReference type="GlyCosmos" id="P02702">
    <property type="glycosylation" value="2 sites, No reported glycans"/>
</dbReference>
<dbReference type="GlyGen" id="P02702">
    <property type="glycosylation" value="2 sites"/>
</dbReference>
<dbReference type="PaxDb" id="9913-ENSBTAP00000027602"/>
<dbReference type="PeptideAtlas" id="P02702"/>
<dbReference type="KEGG" id="bta:516067"/>
<dbReference type="CTD" id="2352"/>
<dbReference type="eggNOG" id="KOG3656">
    <property type="taxonomic scope" value="Eukaryota"/>
</dbReference>
<dbReference type="HOGENOM" id="CLU_070826_1_1_1"/>
<dbReference type="InParanoid" id="P02702"/>
<dbReference type="OrthoDB" id="567542at2759"/>
<dbReference type="Proteomes" id="UP000009136">
    <property type="component" value="Unplaced"/>
</dbReference>
<dbReference type="GO" id="GO:0016324">
    <property type="term" value="C:apical plasma membrane"/>
    <property type="evidence" value="ECO:0007669"/>
    <property type="project" value="UniProtKB-SubCell"/>
</dbReference>
<dbReference type="GO" id="GO:0016323">
    <property type="term" value="C:basolateral plasma membrane"/>
    <property type="evidence" value="ECO:0007669"/>
    <property type="project" value="UniProtKB-SubCell"/>
</dbReference>
<dbReference type="GO" id="GO:0030136">
    <property type="term" value="C:clathrin-coated vesicle"/>
    <property type="evidence" value="ECO:0007669"/>
    <property type="project" value="UniProtKB-SubCell"/>
</dbReference>
<dbReference type="GO" id="GO:0005768">
    <property type="term" value="C:endosome"/>
    <property type="evidence" value="ECO:0007669"/>
    <property type="project" value="UniProtKB-SubCell"/>
</dbReference>
<dbReference type="GO" id="GO:0009897">
    <property type="term" value="C:external side of plasma membrane"/>
    <property type="evidence" value="ECO:0000250"/>
    <property type="project" value="UniProtKB"/>
</dbReference>
<dbReference type="GO" id="GO:0005576">
    <property type="term" value="C:extracellular region"/>
    <property type="evidence" value="ECO:0007669"/>
    <property type="project" value="UniProtKB-SubCell"/>
</dbReference>
<dbReference type="GO" id="GO:0005542">
    <property type="term" value="F:folic acid binding"/>
    <property type="evidence" value="ECO:0000250"/>
    <property type="project" value="UniProtKB"/>
</dbReference>
<dbReference type="GO" id="GO:0061714">
    <property type="term" value="F:folic acid receptor activity"/>
    <property type="evidence" value="ECO:0000250"/>
    <property type="project" value="UniProtKB"/>
</dbReference>
<dbReference type="GO" id="GO:0038023">
    <property type="term" value="F:signaling receptor activity"/>
    <property type="evidence" value="ECO:0000318"/>
    <property type="project" value="GO_Central"/>
</dbReference>
<dbReference type="GO" id="GO:0007155">
    <property type="term" value="P:cell adhesion"/>
    <property type="evidence" value="ECO:0000318"/>
    <property type="project" value="GO_Central"/>
</dbReference>
<dbReference type="GO" id="GO:0015884">
    <property type="term" value="P:folic acid transport"/>
    <property type="evidence" value="ECO:0000250"/>
    <property type="project" value="UniProtKB"/>
</dbReference>
<dbReference type="GO" id="GO:0007342">
    <property type="term" value="P:fusion of sperm to egg plasma membrane involved in single fertilization"/>
    <property type="evidence" value="ECO:0000318"/>
    <property type="project" value="GO_Central"/>
</dbReference>
<dbReference type="GO" id="GO:0035036">
    <property type="term" value="P:sperm-egg recognition"/>
    <property type="evidence" value="ECO:0000318"/>
    <property type="project" value="GO_Central"/>
</dbReference>
<dbReference type="InterPro" id="IPR004269">
    <property type="entry name" value="Folate_rcpt"/>
</dbReference>
<dbReference type="InterPro" id="IPR018143">
    <property type="entry name" value="Folate_rcpt-like"/>
</dbReference>
<dbReference type="PANTHER" id="PTHR10517">
    <property type="entry name" value="FOLATE RECEPTOR"/>
    <property type="match status" value="1"/>
</dbReference>
<dbReference type="PANTHER" id="PTHR10517:SF15">
    <property type="entry name" value="FOLATE RECEPTOR ALPHA"/>
    <property type="match status" value="1"/>
</dbReference>
<dbReference type="Pfam" id="PF03024">
    <property type="entry name" value="Folate_rec"/>
    <property type="match status" value="1"/>
</dbReference>
<gene>
    <name type="primary">FOLR1</name>
</gene>
<organism>
    <name type="scientific">Bos taurus</name>
    <name type="common">Bovine</name>
    <dbReference type="NCBI Taxonomy" id="9913"/>
    <lineage>
        <taxon>Eukaryota</taxon>
        <taxon>Metazoa</taxon>
        <taxon>Chordata</taxon>
        <taxon>Craniata</taxon>
        <taxon>Vertebrata</taxon>
        <taxon>Euteleostomi</taxon>
        <taxon>Mammalia</taxon>
        <taxon>Eutheria</taxon>
        <taxon>Laurasiatheria</taxon>
        <taxon>Artiodactyla</taxon>
        <taxon>Ruminantia</taxon>
        <taxon>Pecora</taxon>
        <taxon>Bovidae</taxon>
        <taxon>Bovinae</taxon>
        <taxon>Bos</taxon>
    </lineage>
</organism>
<name>FOLR1_BOVIN</name>
<comment type="function">
    <text evidence="1 2">Binds to folate and reduced folic acid derivatives and mediates delivery of 5-methyltetrahydrofolate and folate analogs into the interior of cells. Has high affinity for folate and folic acid analogs at neutral pH. Exposure to slightly acidic pH after receptor endocytosis triggers a conformation change that strongly reduces its affinity for folates and mediates their release (By similarity). Required for normal embryonic development and normal cell proliferation (By similarity).</text>
</comment>
<comment type="subcellular location">
    <subcellularLocation>
        <location evidence="1">Cell membrane</location>
        <topology evidence="1">Lipid-anchor</topology>
        <topology evidence="1">GPI-anchor</topology>
    </subcellularLocation>
    <subcellularLocation>
        <location evidence="1">Apical cell membrane</location>
        <topology evidence="1">Lipid-anchor</topology>
        <topology evidence="1">GPI-anchor</topology>
    </subcellularLocation>
    <subcellularLocation>
        <location evidence="1">Basolateral cell membrane</location>
        <topology evidence="1">Lipid-anchor</topology>
        <topology evidence="1">GPI-like-anchor</topology>
    </subcellularLocation>
    <subcellularLocation>
        <location evidence="4">Secreted</location>
    </subcellularLocation>
    <subcellularLocation>
        <location evidence="1">Cytoplasmic vesicle</location>
    </subcellularLocation>
    <subcellularLocation>
        <location evidence="1">Cytoplasmic vesicle</location>
        <location evidence="1">Clathrin-coated vesicle</location>
    </subcellularLocation>
    <subcellularLocation>
        <location evidence="1">Endosome</location>
    </subcellularLocation>
    <text evidence="1">Endocytosed into cytoplasmic vesicles and then recycled to the cell membrane.</text>
</comment>
<comment type="tissue specificity">
    <text evidence="4">Detected in milk (at protein level).</text>
</comment>
<comment type="PTM">
    <text evidence="1">The secreted form is derived from the membrane-bound form either by cleavage of the GPI anchor, or/and by proteolysis catalyzed by a metalloprotease.</text>
</comment>
<comment type="similarity">
    <text evidence="5">Belongs to the folate receptor family.</text>
</comment>
<reference key="1">
    <citation type="submission" date="2005-03" db="EMBL/GenBank/DDBJ databases">
        <title>A second set of bovine ESTs from pooled-tissue normalized libraries.</title>
        <authorList>
            <person name="Smith T.P.L."/>
            <person name="Roberts A.J."/>
            <person name="Echternkamp S.E."/>
            <person name="Chitko-McKown C.G."/>
            <person name="Wray J.E."/>
            <person name="Keele J.W."/>
        </authorList>
    </citation>
    <scope>NUCLEOTIDE SEQUENCE [LARGE SCALE MRNA]</scope>
</reference>
<reference key="2">
    <citation type="journal article" date="1984" name="Carlsberg Res. Commun.">
        <title>The complete amino acid sequence of the folate-binding protein from cow's milk.</title>
        <authorList>
            <person name="Svendsen I."/>
            <person name="Hansen S.I."/>
            <person name="Holm J."/>
            <person name="Lyngbye J."/>
        </authorList>
    </citation>
    <scope>PROTEIN SEQUENCE OF 20-241</scope>
    <source>
        <tissue>Milk</tissue>
    </source>
</reference>
<reference key="3">
    <citation type="journal article" date="1979" name="Carlsberg Res. Commun.">
        <title>Isolation and characterization of the folate-binding protein from cow's milk.</title>
        <authorList>
            <person name="Svendsen I."/>
            <person name="Martin B."/>
            <person name="Pedersen T.G."/>
            <person name="Hansen S.I."/>
            <person name="Holm J."/>
            <person name="Lyngbye J."/>
        </authorList>
    </citation>
    <scope>PROTEIN SEQUENCE OF 20-81; 91-121 AND 211-241</scope>
    <scope>SUBCELLULAR LOCATION</scope>
    <scope>GLYCOSYLATION AT ASN-68 AND ASN-160</scope>
    <scope>TISSUE SPECIFICITY</scope>
    <scope>DISULFIDE BONDS</scope>
    <source>
        <tissue>Milk</tissue>
    </source>
</reference>
<evidence type="ECO:0000250" key="1">
    <source>
        <dbReference type="UniProtKB" id="P15328"/>
    </source>
</evidence>
<evidence type="ECO:0000250" key="2">
    <source>
        <dbReference type="UniProtKB" id="P35846"/>
    </source>
</evidence>
<evidence type="ECO:0000269" key="3">
    <source ref="2"/>
</evidence>
<evidence type="ECO:0000269" key="4">
    <source ref="3"/>
</evidence>
<evidence type="ECO:0000305" key="5"/>
<sequence>MAWQMTQLLLLALVAAAWGAQAPRTPRARTDLLNVCMDAKHHKAEPGPEDSLHEQCSPWRKNACCSVNTSIEAHKDISYLYRFNWDHCGKMEPACKRHFIQDTCLYECSPNLGPWIREVNQRWRKERVLGVPLCKEDCQSWWEDCRTSYTCKSNWHKGWNWTSGYNQCPVKAACHRFDFYFPTPAALCNEIWSHSYKVSNYSRGSGRCIQMWFDPFQGNPNEEVARFYAENPTSGSTPQGI</sequence>
<feature type="signal peptide" evidence="3 4">
    <location>
        <begin position="1"/>
        <end position="19"/>
    </location>
</feature>
<feature type="chain" id="PRO_0000147394" description="Folate receptor alpha">
    <location>
        <begin position="20"/>
        <end position="234"/>
    </location>
</feature>
<feature type="propeptide" id="PRO_0000424694" description="Removed in mature form" evidence="3">
    <location>
        <begin position="235"/>
        <end position="241"/>
    </location>
</feature>
<feature type="binding site" evidence="1">
    <location>
        <position position="102"/>
    </location>
    <ligand>
        <name>folate</name>
        <dbReference type="ChEBI" id="CHEBI:62501"/>
    </ligand>
</feature>
<feature type="binding site" evidence="1">
    <location>
        <position position="106"/>
    </location>
    <ligand>
        <name>folate</name>
        <dbReference type="ChEBI" id="CHEBI:62501"/>
    </ligand>
</feature>
<feature type="binding site" evidence="1">
    <location>
        <begin position="123"/>
        <end position="127"/>
    </location>
    <ligand>
        <name>folate</name>
        <dbReference type="ChEBI" id="CHEBI:62501"/>
    </ligand>
</feature>
<feature type="binding site" evidence="1">
    <location>
        <begin position="156"/>
        <end position="161"/>
    </location>
    <ligand>
        <name>folate</name>
        <dbReference type="ChEBI" id="CHEBI:62501"/>
    </ligand>
</feature>
<feature type="binding site" evidence="1">
    <location>
        <position position="195"/>
    </location>
    <ligand>
        <name>folate</name>
        <dbReference type="ChEBI" id="CHEBI:62501"/>
    </ligand>
</feature>
<feature type="lipid moiety-binding region" description="GPI-anchor amidated serine" evidence="1">
    <location>
        <position position="234"/>
    </location>
</feature>
<feature type="glycosylation site" description="N-linked (GlcNAc...) asparagine" evidence="4">
    <location>
        <position position="68"/>
    </location>
</feature>
<feature type="glycosylation site" description="N-linked (GlcNAc...) asparagine" evidence="4">
    <location>
        <position position="160"/>
    </location>
</feature>
<feature type="disulfide bond" evidence="1">
    <location>
        <begin position="36"/>
        <end position="64"/>
    </location>
</feature>
<feature type="disulfide bond" evidence="1">
    <location>
        <begin position="56"/>
        <end position="104"/>
    </location>
</feature>
<feature type="disulfide bond" evidence="1">
    <location>
        <begin position="65"/>
        <end position="108"/>
    </location>
</feature>
<feature type="disulfide bond" evidence="1">
    <location>
        <begin position="88"/>
        <end position="174"/>
    </location>
</feature>
<feature type="disulfide bond" evidence="1">
    <location>
        <begin position="95"/>
        <end position="145"/>
    </location>
</feature>
<feature type="disulfide bond" evidence="1">
    <location>
        <begin position="134"/>
        <end position="208"/>
    </location>
</feature>
<feature type="disulfide bond" evidence="1">
    <location>
        <begin position="138"/>
        <end position="188"/>
    </location>
</feature>
<feature type="disulfide bond" evidence="1">
    <location>
        <begin position="151"/>
        <end position="168"/>
    </location>
</feature>
<feature type="sequence conflict" description="In Ref. 2; AA sequence." evidence="5" ref="2">
    <original>CH</original>
    <variation>HC</variation>
    <location>
        <begin position="174"/>
        <end position="175"/>
    </location>
</feature>
<protein>
    <recommendedName>
        <fullName>Folate receptor alpha</fullName>
        <shortName>FR-alpha</shortName>
    </recommendedName>
    <alternativeName>
        <fullName>Folate receptor 1</fullName>
    </alternativeName>
    <alternativeName>
        <fullName>Folate-binding protein 1</fullName>
        <shortName>FBP</shortName>
    </alternativeName>
    <alternativeName>
        <fullName>Milk folate-binding protein</fullName>
    </alternativeName>
</protein>
<proteinExistence type="evidence at protein level"/>
<accession>P02702</accession>
<keyword id="KW-1003">Cell membrane</keyword>
<keyword id="KW-0968">Cytoplasmic vesicle</keyword>
<keyword id="KW-0903">Direct protein sequencing</keyword>
<keyword id="KW-1015">Disulfide bond</keyword>
<keyword id="KW-0967">Endosome</keyword>
<keyword id="KW-0290">Folate-binding</keyword>
<keyword id="KW-0325">Glycoprotein</keyword>
<keyword id="KW-0336">GPI-anchor</keyword>
<keyword id="KW-0449">Lipoprotein</keyword>
<keyword id="KW-0472">Membrane</keyword>
<keyword id="KW-0494">Milk protein</keyword>
<keyword id="KW-0675">Receptor</keyword>
<keyword id="KW-1185">Reference proteome</keyword>
<keyword id="KW-0964">Secreted</keyword>
<keyword id="KW-0732">Signal</keyword>
<keyword id="KW-0813">Transport</keyword>